<dbReference type="EC" id="2.5.1.78" evidence="1"/>
<dbReference type="EMBL" id="BA000045">
    <property type="protein sequence ID" value="BAC88983.1"/>
    <property type="molecule type" value="Genomic_DNA"/>
</dbReference>
<dbReference type="RefSeq" id="NP_923988.1">
    <property type="nucleotide sequence ID" value="NC_005125.1"/>
</dbReference>
<dbReference type="RefSeq" id="WP_011141044.1">
    <property type="nucleotide sequence ID" value="NC_005125.1"/>
</dbReference>
<dbReference type="SMR" id="Q7NLS9"/>
<dbReference type="FunCoup" id="Q7NLS9">
    <property type="interactions" value="340"/>
</dbReference>
<dbReference type="STRING" id="251221.gene:10758520"/>
<dbReference type="EnsemblBacteria" id="BAC88983">
    <property type="protein sequence ID" value="BAC88983"/>
    <property type="gene ID" value="BAC88983"/>
</dbReference>
<dbReference type="KEGG" id="gvi:glr1042"/>
<dbReference type="PATRIC" id="fig|251221.4.peg.1068"/>
<dbReference type="eggNOG" id="COG0054">
    <property type="taxonomic scope" value="Bacteria"/>
</dbReference>
<dbReference type="HOGENOM" id="CLU_089358_1_0_3"/>
<dbReference type="InParanoid" id="Q7NLS9"/>
<dbReference type="OrthoDB" id="9809709at2"/>
<dbReference type="PhylomeDB" id="Q7NLS9"/>
<dbReference type="UniPathway" id="UPA00275">
    <property type="reaction ID" value="UER00404"/>
</dbReference>
<dbReference type="Proteomes" id="UP000000557">
    <property type="component" value="Chromosome"/>
</dbReference>
<dbReference type="GO" id="GO:0005737">
    <property type="term" value="C:cytoplasm"/>
    <property type="evidence" value="ECO:0000318"/>
    <property type="project" value="GO_Central"/>
</dbReference>
<dbReference type="GO" id="GO:0005829">
    <property type="term" value="C:cytosol"/>
    <property type="evidence" value="ECO:0000318"/>
    <property type="project" value="GO_Central"/>
</dbReference>
<dbReference type="GO" id="GO:0009349">
    <property type="term" value="C:riboflavin synthase complex"/>
    <property type="evidence" value="ECO:0007669"/>
    <property type="project" value="InterPro"/>
</dbReference>
<dbReference type="GO" id="GO:0000906">
    <property type="term" value="F:6,7-dimethyl-8-ribityllumazine synthase activity"/>
    <property type="evidence" value="ECO:0000318"/>
    <property type="project" value="GO_Central"/>
</dbReference>
<dbReference type="GO" id="GO:0009231">
    <property type="term" value="P:riboflavin biosynthetic process"/>
    <property type="evidence" value="ECO:0000318"/>
    <property type="project" value="GO_Central"/>
</dbReference>
<dbReference type="CDD" id="cd09209">
    <property type="entry name" value="Lumazine_synthase-I"/>
    <property type="match status" value="1"/>
</dbReference>
<dbReference type="FunFam" id="3.40.50.960:FF:000001">
    <property type="entry name" value="6,7-dimethyl-8-ribityllumazine synthase"/>
    <property type="match status" value="1"/>
</dbReference>
<dbReference type="Gene3D" id="3.40.50.960">
    <property type="entry name" value="Lumazine/riboflavin synthase"/>
    <property type="match status" value="1"/>
</dbReference>
<dbReference type="HAMAP" id="MF_00178">
    <property type="entry name" value="Lumazine_synth"/>
    <property type="match status" value="1"/>
</dbReference>
<dbReference type="InterPro" id="IPR034964">
    <property type="entry name" value="LS"/>
</dbReference>
<dbReference type="InterPro" id="IPR002180">
    <property type="entry name" value="LS/RS"/>
</dbReference>
<dbReference type="InterPro" id="IPR036467">
    <property type="entry name" value="LS/RS_sf"/>
</dbReference>
<dbReference type="NCBIfam" id="TIGR00114">
    <property type="entry name" value="lumazine-synth"/>
    <property type="match status" value="1"/>
</dbReference>
<dbReference type="PANTHER" id="PTHR21058:SF0">
    <property type="entry name" value="6,7-DIMETHYL-8-RIBITYLLUMAZINE SYNTHASE"/>
    <property type="match status" value="1"/>
</dbReference>
<dbReference type="PANTHER" id="PTHR21058">
    <property type="entry name" value="6,7-DIMETHYL-8-RIBITYLLUMAZINE SYNTHASE DMRL SYNTHASE LUMAZINE SYNTHASE"/>
    <property type="match status" value="1"/>
</dbReference>
<dbReference type="Pfam" id="PF00885">
    <property type="entry name" value="DMRL_synthase"/>
    <property type="match status" value="1"/>
</dbReference>
<dbReference type="SUPFAM" id="SSF52121">
    <property type="entry name" value="Lumazine synthase"/>
    <property type="match status" value="1"/>
</dbReference>
<comment type="function">
    <text evidence="1">Catalyzes the formation of 6,7-dimethyl-8-ribityllumazine by condensation of 5-amino-6-(D-ribitylamino)uracil with 3,4-dihydroxy-2-butanone 4-phosphate. This is the penultimate step in the biosynthesis of riboflavin.</text>
</comment>
<comment type="catalytic activity">
    <reaction evidence="1">
        <text>(2S)-2-hydroxy-3-oxobutyl phosphate + 5-amino-6-(D-ribitylamino)uracil = 6,7-dimethyl-8-(1-D-ribityl)lumazine + phosphate + 2 H2O + H(+)</text>
        <dbReference type="Rhea" id="RHEA:26152"/>
        <dbReference type="ChEBI" id="CHEBI:15377"/>
        <dbReference type="ChEBI" id="CHEBI:15378"/>
        <dbReference type="ChEBI" id="CHEBI:15934"/>
        <dbReference type="ChEBI" id="CHEBI:43474"/>
        <dbReference type="ChEBI" id="CHEBI:58201"/>
        <dbReference type="ChEBI" id="CHEBI:58830"/>
        <dbReference type="EC" id="2.5.1.78"/>
    </reaction>
</comment>
<comment type="pathway">
    <text evidence="1">Cofactor biosynthesis; riboflavin biosynthesis; riboflavin from 2-hydroxy-3-oxobutyl phosphate and 5-amino-6-(D-ribitylamino)uracil: step 1/2.</text>
</comment>
<comment type="similarity">
    <text evidence="1">Belongs to the DMRL synthase family.</text>
</comment>
<protein>
    <recommendedName>
        <fullName evidence="1">6,7-dimethyl-8-ribityllumazine synthase</fullName>
        <shortName evidence="1">DMRL synthase</shortName>
        <shortName evidence="1">LS</shortName>
        <shortName evidence="1">Lumazine synthase</shortName>
        <ecNumber evidence="1">2.5.1.78</ecNumber>
    </recommendedName>
</protein>
<gene>
    <name evidence="1" type="primary">ribH</name>
    <name type="ordered locus">glr1042</name>
</gene>
<organism>
    <name type="scientific">Gloeobacter violaceus (strain ATCC 29082 / PCC 7421)</name>
    <dbReference type="NCBI Taxonomy" id="251221"/>
    <lineage>
        <taxon>Bacteria</taxon>
        <taxon>Bacillati</taxon>
        <taxon>Cyanobacteriota</taxon>
        <taxon>Cyanophyceae</taxon>
        <taxon>Gloeobacterales</taxon>
        <taxon>Gloeobacteraceae</taxon>
        <taxon>Gloeobacter</taxon>
    </lineage>
</organism>
<sequence>MTVFEGNLQDTRDLKFAIVIARFNDLVVGKLLSACEDSLRRHGVAVGPDSHQVDYAWVPGSFEIPMVARQLALSGRYDAIVCLGAVIRGQTSHYDHVASEVAKGIQALAFQTGVPVTFGVLTTDTMQQAIERAGIKSNLGWEYGENAIEMATLTRKIRHLVAVRAVQPELPEQTPPSLLQ</sequence>
<name>RISB_GLOVI</name>
<evidence type="ECO:0000255" key="1">
    <source>
        <dbReference type="HAMAP-Rule" id="MF_00178"/>
    </source>
</evidence>
<feature type="chain" id="PRO_0000134759" description="6,7-dimethyl-8-ribityllumazine synthase">
    <location>
        <begin position="1"/>
        <end position="180"/>
    </location>
</feature>
<feature type="active site" description="Proton donor" evidence="1">
    <location>
        <position position="93"/>
    </location>
</feature>
<feature type="binding site" evidence="1">
    <location>
        <position position="23"/>
    </location>
    <ligand>
        <name>5-amino-6-(D-ribitylamino)uracil</name>
        <dbReference type="ChEBI" id="CHEBI:15934"/>
    </ligand>
</feature>
<feature type="binding site" evidence="1">
    <location>
        <begin position="61"/>
        <end position="63"/>
    </location>
    <ligand>
        <name>5-amino-6-(D-ribitylamino)uracil</name>
        <dbReference type="ChEBI" id="CHEBI:15934"/>
    </ligand>
</feature>
<feature type="binding site" evidence="1">
    <location>
        <begin position="85"/>
        <end position="87"/>
    </location>
    <ligand>
        <name>5-amino-6-(D-ribitylamino)uracil</name>
        <dbReference type="ChEBI" id="CHEBI:15934"/>
    </ligand>
</feature>
<feature type="binding site" evidence="1">
    <location>
        <begin position="90"/>
        <end position="91"/>
    </location>
    <ligand>
        <name>(2S)-2-hydroxy-3-oxobutyl phosphate</name>
        <dbReference type="ChEBI" id="CHEBI:58830"/>
    </ligand>
</feature>
<feature type="binding site" evidence="1">
    <location>
        <position position="118"/>
    </location>
    <ligand>
        <name>5-amino-6-(D-ribitylamino)uracil</name>
        <dbReference type="ChEBI" id="CHEBI:15934"/>
    </ligand>
</feature>
<feature type="binding site" evidence="1">
    <location>
        <position position="132"/>
    </location>
    <ligand>
        <name>(2S)-2-hydroxy-3-oxobutyl phosphate</name>
        <dbReference type="ChEBI" id="CHEBI:58830"/>
    </ligand>
</feature>
<accession>Q7NLS9</accession>
<proteinExistence type="inferred from homology"/>
<keyword id="KW-1185">Reference proteome</keyword>
<keyword id="KW-0686">Riboflavin biosynthesis</keyword>
<keyword id="KW-0808">Transferase</keyword>
<reference key="1">
    <citation type="journal article" date="2003" name="DNA Res.">
        <title>Complete genome structure of Gloeobacter violaceus PCC 7421, a cyanobacterium that lacks thylakoids.</title>
        <authorList>
            <person name="Nakamura Y."/>
            <person name="Kaneko T."/>
            <person name="Sato S."/>
            <person name="Mimuro M."/>
            <person name="Miyashita H."/>
            <person name="Tsuchiya T."/>
            <person name="Sasamoto S."/>
            <person name="Watanabe A."/>
            <person name="Kawashima K."/>
            <person name="Kishida Y."/>
            <person name="Kiyokawa C."/>
            <person name="Kohara M."/>
            <person name="Matsumoto M."/>
            <person name="Matsuno A."/>
            <person name="Nakazaki N."/>
            <person name="Shimpo S."/>
            <person name="Takeuchi C."/>
            <person name="Yamada M."/>
            <person name="Tabata S."/>
        </authorList>
    </citation>
    <scope>NUCLEOTIDE SEQUENCE [LARGE SCALE GENOMIC DNA]</scope>
    <source>
        <strain>ATCC 29082 / PCC 7421</strain>
    </source>
</reference>